<comment type="function">
    <text evidence="1">Bidirectionally degrades single-stranded DNA into large acid-insoluble oligonucleotides, which are then degraded further into small acid-soluble oligonucleotides.</text>
</comment>
<comment type="catalytic activity">
    <reaction evidence="1">
        <text>Exonucleolytic cleavage in either 5'- to 3'- or 3'- to 5'-direction to yield nucleoside 5'-phosphates.</text>
        <dbReference type="EC" id="3.1.11.6"/>
    </reaction>
</comment>
<comment type="subunit">
    <text evidence="1">Heterooligomer composed of large and small subunits.</text>
</comment>
<comment type="subcellular location">
    <subcellularLocation>
        <location evidence="1">Cytoplasm</location>
    </subcellularLocation>
</comment>
<comment type="similarity">
    <text evidence="1">Belongs to the XseA family.</text>
</comment>
<sequence>MSSQLPILTVSQLNRQVKGFLENEIGLVHVEGEISNLSKPSSGHYYFTLKDSTAQIRCAFFKNRHSSSLLRNFNDGQQIVASGKLSLYEARGEYQLIVEEIVEAGMGILYQRFEELKIKLAREGLFNPERKKTLPRIPETIGIITSPTGAAIQDILSTLARRFPIARIIIYPSEVQGQAAPQQLVNALKLANTHKRCQVLILARGGGSIEDLWAFNDEYLARQIAISEIPVVSGIGHETDFTIADFVADYRAETPTAAATAVTPNCIELFNILDTAIYRLHDAIIRLVKGLQLKLNHLIDKIASPRQTISTYWQTLDYLERQLISAMTQFINLNINKMNLFSTRLQANNPKTQIERTKIQLRQLILQLTQEIRIKVNQLKHQLSTNLSTLHAVSPLATLDRGYAIVSKNQRILFAAQQAQIGDTIDVRLAKGSLACEVTQIKD</sequence>
<proteinExistence type="inferred from homology"/>
<organism>
    <name type="scientific">Legionella pneumophila (strain Lens)</name>
    <dbReference type="NCBI Taxonomy" id="297245"/>
    <lineage>
        <taxon>Bacteria</taxon>
        <taxon>Pseudomonadati</taxon>
        <taxon>Pseudomonadota</taxon>
        <taxon>Gammaproteobacteria</taxon>
        <taxon>Legionellales</taxon>
        <taxon>Legionellaceae</taxon>
        <taxon>Legionella</taxon>
    </lineage>
</organism>
<name>EX7L_LEGPL</name>
<dbReference type="EC" id="3.1.11.6" evidence="1"/>
<dbReference type="EMBL" id="CR628337">
    <property type="protein sequence ID" value="CAH15091.1"/>
    <property type="molecule type" value="Genomic_DNA"/>
</dbReference>
<dbReference type="RefSeq" id="WP_011215014.1">
    <property type="nucleotide sequence ID" value="NC_006369.1"/>
</dbReference>
<dbReference type="SMR" id="Q5WY82"/>
<dbReference type="KEGG" id="lpf:lpl0857"/>
<dbReference type="LegioList" id="lpl0857"/>
<dbReference type="HOGENOM" id="CLU_023625_3_1_6"/>
<dbReference type="Proteomes" id="UP000002517">
    <property type="component" value="Chromosome"/>
</dbReference>
<dbReference type="GO" id="GO:0005737">
    <property type="term" value="C:cytoplasm"/>
    <property type="evidence" value="ECO:0007669"/>
    <property type="project" value="UniProtKB-SubCell"/>
</dbReference>
<dbReference type="GO" id="GO:0009318">
    <property type="term" value="C:exodeoxyribonuclease VII complex"/>
    <property type="evidence" value="ECO:0007669"/>
    <property type="project" value="InterPro"/>
</dbReference>
<dbReference type="GO" id="GO:0008855">
    <property type="term" value="F:exodeoxyribonuclease VII activity"/>
    <property type="evidence" value="ECO:0007669"/>
    <property type="project" value="UniProtKB-UniRule"/>
</dbReference>
<dbReference type="GO" id="GO:0003676">
    <property type="term" value="F:nucleic acid binding"/>
    <property type="evidence" value="ECO:0007669"/>
    <property type="project" value="InterPro"/>
</dbReference>
<dbReference type="GO" id="GO:0006308">
    <property type="term" value="P:DNA catabolic process"/>
    <property type="evidence" value="ECO:0007669"/>
    <property type="project" value="UniProtKB-UniRule"/>
</dbReference>
<dbReference type="CDD" id="cd04489">
    <property type="entry name" value="ExoVII_LU_OBF"/>
    <property type="match status" value="1"/>
</dbReference>
<dbReference type="Gene3D" id="2.40.50.140">
    <property type="entry name" value="Nucleic acid-binding proteins"/>
    <property type="match status" value="1"/>
</dbReference>
<dbReference type="HAMAP" id="MF_00378">
    <property type="entry name" value="Exonuc_7_L"/>
    <property type="match status" value="1"/>
</dbReference>
<dbReference type="InterPro" id="IPR003753">
    <property type="entry name" value="Exonuc_VII_L"/>
</dbReference>
<dbReference type="InterPro" id="IPR020579">
    <property type="entry name" value="Exonuc_VII_lsu_C"/>
</dbReference>
<dbReference type="InterPro" id="IPR012340">
    <property type="entry name" value="NA-bd_OB-fold"/>
</dbReference>
<dbReference type="InterPro" id="IPR025824">
    <property type="entry name" value="OB-fold_nuc-bd_dom"/>
</dbReference>
<dbReference type="NCBIfam" id="TIGR00237">
    <property type="entry name" value="xseA"/>
    <property type="match status" value="1"/>
</dbReference>
<dbReference type="PANTHER" id="PTHR30008">
    <property type="entry name" value="EXODEOXYRIBONUCLEASE 7 LARGE SUBUNIT"/>
    <property type="match status" value="1"/>
</dbReference>
<dbReference type="PANTHER" id="PTHR30008:SF0">
    <property type="entry name" value="EXODEOXYRIBONUCLEASE 7 LARGE SUBUNIT"/>
    <property type="match status" value="1"/>
</dbReference>
<dbReference type="Pfam" id="PF02601">
    <property type="entry name" value="Exonuc_VII_L"/>
    <property type="match status" value="1"/>
</dbReference>
<dbReference type="Pfam" id="PF13742">
    <property type="entry name" value="tRNA_anti_2"/>
    <property type="match status" value="1"/>
</dbReference>
<accession>Q5WY82</accession>
<evidence type="ECO:0000255" key="1">
    <source>
        <dbReference type="HAMAP-Rule" id="MF_00378"/>
    </source>
</evidence>
<protein>
    <recommendedName>
        <fullName evidence="1">Exodeoxyribonuclease 7 large subunit</fullName>
        <ecNumber evidence="1">3.1.11.6</ecNumber>
    </recommendedName>
    <alternativeName>
        <fullName evidence="1">Exodeoxyribonuclease VII large subunit</fullName>
        <shortName evidence="1">Exonuclease VII large subunit</shortName>
    </alternativeName>
</protein>
<gene>
    <name evidence="1" type="primary">xseA</name>
    <name type="ordered locus">lpl0857</name>
</gene>
<keyword id="KW-0963">Cytoplasm</keyword>
<keyword id="KW-0269">Exonuclease</keyword>
<keyword id="KW-0378">Hydrolase</keyword>
<keyword id="KW-0540">Nuclease</keyword>
<feature type="chain" id="PRO_0000273667" description="Exodeoxyribonuclease 7 large subunit">
    <location>
        <begin position="1"/>
        <end position="443"/>
    </location>
</feature>
<reference key="1">
    <citation type="journal article" date="2004" name="Nat. Genet.">
        <title>Evidence in the Legionella pneumophila genome for exploitation of host cell functions and high genome plasticity.</title>
        <authorList>
            <person name="Cazalet C."/>
            <person name="Rusniok C."/>
            <person name="Brueggemann H."/>
            <person name="Zidane N."/>
            <person name="Magnier A."/>
            <person name="Ma L."/>
            <person name="Tichit M."/>
            <person name="Jarraud S."/>
            <person name="Bouchier C."/>
            <person name="Vandenesch F."/>
            <person name="Kunst F."/>
            <person name="Etienne J."/>
            <person name="Glaser P."/>
            <person name="Buchrieser C."/>
        </authorList>
    </citation>
    <scope>NUCLEOTIDE SEQUENCE [LARGE SCALE GENOMIC DNA]</scope>
    <source>
        <strain>Lens</strain>
    </source>
</reference>